<accession>C3P710</accession>
<gene>
    <name evidence="1" type="primary">metE</name>
    <name type="ordered locus">BAA_4241</name>
</gene>
<name>METE_BACAA</name>
<feature type="chain" id="PRO_1000203706" description="5-methyltetrahydropteroyltriglutamate--homocysteine methyltransferase">
    <location>
        <begin position="1"/>
        <end position="762"/>
    </location>
</feature>
<feature type="active site" description="Proton donor" evidence="1">
    <location>
        <position position="698"/>
    </location>
</feature>
<feature type="binding site" evidence="1">
    <location>
        <begin position="17"/>
        <end position="20"/>
    </location>
    <ligand>
        <name>5-methyltetrahydropteroyltri-L-glutamate</name>
        <dbReference type="ChEBI" id="CHEBI:58207"/>
    </ligand>
</feature>
<feature type="binding site" evidence="1">
    <location>
        <position position="111"/>
    </location>
    <ligand>
        <name>5-methyltetrahydropteroyltri-L-glutamate</name>
        <dbReference type="ChEBI" id="CHEBI:58207"/>
    </ligand>
</feature>
<feature type="binding site" evidence="1">
    <location>
        <begin position="435"/>
        <end position="437"/>
    </location>
    <ligand>
        <name>L-homocysteine</name>
        <dbReference type="ChEBI" id="CHEBI:58199"/>
    </ligand>
</feature>
<feature type="binding site" evidence="1">
    <location>
        <begin position="435"/>
        <end position="437"/>
    </location>
    <ligand>
        <name>L-methionine</name>
        <dbReference type="ChEBI" id="CHEBI:57844"/>
    </ligand>
</feature>
<feature type="binding site" evidence="1">
    <location>
        <position position="488"/>
    </location>
    <ligand>
        <name>L-homocysteine</name>
        <dbReference type="ChEBI" id="CHEBI:58199"/>
    </ligand>
</feature>
<feature type="binding site" evidence="1">
    <location>
        <position position="488"/>
    </location>
    <ligand>
        <name>L-methionine</name>
        <dbReference type="ChEBI" id="CHEBI:57844"/>
    </ligand>
</feature>
<feature type="binding site" evidence="1">
    <location>
        <begin position="519"/>
        <end position="520"/>
    </location>
    <ligand>
        <name>5-methyltetrahydropteroyltri-L-glutamate</name>
        <dbReference type="ChEBI" id="CHEBI:58207"/>
    </ligand>
</feature>
<feature type="binding site" evidence="1">
    <location>
        <position position="565"/>
    </location>
    <ligand>
        <name>5-methyltetrahydropteroyltri-L-glutamate</name>
        <dbReference type="ChEBI" id="CHEBI:58207"/>
    </ligand>
</feature>
<feature type="binding site" evidence="1">
    <location>
        <position position="603"/>
    </location>
    <ligand>
        <name>L-homocysteine</name>
        <dbReference type="ChEBI" id="CHEBI:58199"/>
    </ligand>
</feature>
<feature type="binding site" evidence="1">
    <location>
        <position position="603"/>
    </location>
    <ligand>
        <name>L-methionine</name>
        <dbReference type="ChEBI" id="CHEBI:57844"/>
    </ligand>
</feature>
<feature type="binding site" evidence="1">
    <location>
        <position position="609"/>
    </location>
    <ligand>
        <name>5-methyltetrahydropteroyltri-L-glutamate</name>
        <dbReference type="ChEBI" id="CHEBI:58207"/>
    </ligand>
</feature>
<feature type="binding site" evidence="1">
    <location>
        <position position="645"/>
    </location>
    <ligand>
        <name>Zn(2+)</name>
        <dbReference type="ChEBI" id="CHEBI:29105"/>
        <note>catalytic</note>
    </ligand>
</feature>
<feature type="binding site" evidence="1">
    <location>
        <position position="647"/>
    </location>
    <ligand>
        <name>Zn(2+)</name>
        <dbReference type="ChEBI" id="CHEBI:29105"/>
        <note>catalytic</note>
    </ligand>
</feature>
<feature type="binding site" evidence="1">
    <location>
        <position position="669"/>
    </location>
    <ligand>
        <name>Zn(2+)</name>
        <dbReference type="ChEBI" id="CHEBI:29105"/>
        <note>catalytic</note>
    </ligand>
</feature>
<feature type="binding site" evidence="1">
    <location>
        <position position="730"/>
    </location>
    <ligand>
        <name>Zn(2+)</name>
        <dbReference type="ChEBI" id="CHEBI:29105"/>
        <note>catalytic</note>
    </ligand>
</feature>
<protein>
    <recommendedName>
        <fullName evidence="1">5-methyltetrahydropteroyltriglutamate--homocysteine methyltransferase</fullName>
        <ecNumber evidence="1">2.1.1.14</ecNumber>
    </recommendedName>
    <alternativeName>
        <fullName evidence="1">Cobalamin-independent methionine synthase</fullName>
    </alternativeName>
    <alternativeName>
        <fullName evidence="1">Methionine synthase, vitamin-B12 independent isozyme</fullName>
    </alternativeName>
</protein>
<comment type="function">
    <text evidence="1">Catalyzes the transfer of a methyl group from 5-methyltetrahydrofolate to homocysteine resulting in methionine formation.</text>
</comment>
<comment type="catalytic activity">
    <reaction evidence="1">
        <text>5-methyltetrahydropteroyltri-L-glutamate + L-homocysteine = tetrahydropteroyltri-L-glutamate + L-methionine</text>
        <dbReference type="Rhea" id="RHEA:21196"/>
        <dbReference type="ChEBI" id="CHEBI:57844"/>
        <dbReference type="ChEBI" id="CHEBI:58140"/>
        <dbReference type="ChEBI" id="CHEBI:58199"/>
        <dbReference type="ChEBI" id="CHEBI:58207"/>
        <dbReference type="EC" id="2.1.1.14"/>
    </reaction>
</comment>
<comment type="cofactor">
    <cofactor evidence="1">
        <name>Zn(2+)</name>
        <dbReference type="ChEBI" id="CHEBI:29105"/>
    </cofactor>
    <text evidence="1">Binds 1 zinc ion per subunit.</text>
</comment>
<comment type="pathway">
    <text evidence="1">Amino-acid biosynthesis; L-methionine biosynthesis via de novo pathway; L-methionine from L-homocysteine (MetE route): step 1/1.</text>
</comment>
<comment type="similarity">
    <text evidence="1">Belongs to the vitamin-B12 independent methionine synthase family.</text>
</comment>
<dbReference type="EC" id="2.1.1.14" evidence="1"/>
<dbReference type="EMBL" id="CP001598">
    <property type="protein sequence ID" value="ACQ46752.1"/>
    <property type="molecule type" value="Genomic_DNA"/>
</dbReference>
<dbReference type="RefSeq" id="WP_001007635.1">
    <property type="nucleotide sequence ID" value="NC_012659.1"/>
</dbReference>
<dbReference type="SMR" id="C3P710"/>
<dbReference type="GeneID" id="45023890"/>
<dbReference type="KEGG" id="bai:BAA_4241"/>
<dbReference type="HOGENOM" id="CLU_013175_0_0_9"/>
<dbReference type="UniPathway" id="UPA00051">
    <property type="reaction ID" value="UER00082"/>
</dbReference>
<dbReference type="GO" id="GO:0003871">
    <property type="term" value="F:5-methyltetrahydropteroyltriglutamate-homocysteine S-methyltransferase activity"/>
    <property type="evidence" value="ECO:0007669"/>
    <property type="project" value="UniProtKB-UniRule"/>
</dbReference>
<dbReference type="GO" id="GO:0008270">
    <property type="term" value="F:zinc ion binding"/>
    <property type="evidence" value="ECO:0007669"/>
    <property type="project" value="InterPro"/>
</dbReference>
<dbReference type="GO" id="GO:0009086">
    <property type="term" value="P:methionine biosynthetic process"/>
    <property type="evidence" value="ECO:0007669"/>
    <property type="project" value="UniProtKB-UniRule"/>
</dbReference>
<dbReference type="GO" id="GO:0032259">
    <property type="term" value="P:methylation"/>
    <property type="evidence" value="ECO:0007669"/>
    <property type="project" value="UniProtKB-KW"/>
</dbReference>
<dbReference type="CDD" id="cd03311">
    <property type="entry name" value="CIMS_C_terminal_like"/>
    <property type="match status" value="1"/>
</dbReference>
<dbReference type="CDD" id="cd03312">
    <property type="entry name" value="CIMS_N_terminal_like"/>
    <property type="match status" value="1"/>
</dbReference>
<dbReference type="Gene3D" id="3.20.20.210">
    <property type="match status" value="2"/>
</dbReference>
<dbReference type="HAMAP" id="MF_00172">
    <property type="entry name" value="Meth_synth"/>
    <property type="match status" value="1"/>
</dbReference>
<dbReference type="InterPro" id="IPR013215">
    <property type="entry name" value="Cbl-indep_Met_Synth_N"/>
</dbReference>
<dbReference type="InterPro" id="IPR006276">
    <property type="entry name" value="Cobalamin-indep_Met_synthase"/>
</dbReference>
<dbReference type="InterPro" id="IPR002629">
    <property type="entry name" value="Met_Synth_C/arc"/>
</dbReference>
<dbReference type="InterPro" id="IPR038071">
    <property type="entry name" value="UROD/MetE-like_sf"/>
</dbReference>
<dbReference type="NCBIfam" id="TIGR01371">
    <property type="entry name" value="met_syn_B12ind"/>
    <property type="match status" value="1"/>
</dbReference>
<dbReference type="NCBIfam" id="NF003556">
    <property type="entry name" value="PRK05222.1"/>
    <property type="match status" value="1"/>
</dbReference>
<dbReference type="PANTHER" id="PTHR30519">
    <property type="entry name" value="5-METHYLTETRAHYDROPTEROYLTRIGLUTAMATE--HOMOCYSTEINE METHYLTRANSFERASE"/>
    <property type="match status" value="1"/>
</dbReference>
<dbReference type="Pfam" id="PF08267">
    <property type="entry name" value="Meth_synt_1"/>
    <property type="match status" value="1"/>
</dbReference>
<dbReference type="Pfam" id="PF01717">
    <property type="entry name" value="Meth_synt_2"/>
    <property type="match status" value="1"/>
</dbReference>
<dbReference type="PIRSF" id="PIRSF000382">
    <property type="entry name" value="MeTrfase_B12_ind"/>
    <property type="match status" value="1"/>
</dbReference>
<dbReference type="SUPFAM" id="SSF51726">
    <property type="entry name" value="UROD/MetE-like"/>
    <property type="match status" value="2"/>
</dbReference>
<organism>
    <name type="scientific">Bacillus anthracis (strain A0248)</name>
    <dbReference type="NCBI Taxonomy" id="592021"/>
    <lineage>
        <taxon>Bacteria</taxon>
        <taxon>Bacillati</taxon>
        <taxon>Bacillota</taxon>
        <taxon>Bacilli</taxon>
        <taxon>Bacillales</taxon>
        <taxon>Bacillaceae</taxon>
        <taxon>Bacillus</taxon>
        <taxon>Bacillus cereus group</taxon>
    </lineage>
</organism>
<sequence>MAIQTSNLGYPRIGLQREWKKTLEAFWSNKINEEQFLTTMKEIRLQHVKVQQEKGIELIPIGDFTYYDHVLDTAYMLGFIPSRFSEFTSYLDVYFAMARGSKDHVASEMTKWFNTNYHYIVPEYEEGLQISLKDNRPLRLYEEAKQELGVDGKPVILGPYTFLKLAKGYTQEQFATILKQLVAPYVQLLSELHAAGAQIIQVDEPIFASLTKEEVQQAKEIYEAIRKEVPNATLLLQTYFDSVEENYEEIITFPVSSIGLDFVHGKEGNLNAISKYGFPADKTLAVGCIDGRNIWRADLDEVLTLFTTLQKQVQTKDLIVQPSCSLLHTPIDKTEETHLSTELFDALAFANQKLEELVLIHSALTQGTESISNELETYRNVHHTIRSSAARNREDVKAARTALKEEDFSRPLPFEKRYELQQVALKLPLLPTTTIGSFPQTTEVRQTRKEWRNGIISNEQYEQFIEKETEKWIRYQEEIGLDVLVHGEFERTDMVEYFGERLAGFSFTKNGWVQSYGSRCVKPPVIYGDVAFINGMTIKETVYAQSLTEKVVKGMLTGPVTILNWSFVRNDIPRKEVSYQIALALRHEIELLESSGIRVIQVDEPALREGMPLKEKDWDAYITWAVQSFLLATSSVANETQIHTHMCYSNFEDIVDAIRALDADVISIETSRSHGEFIDTLKHTTYEKGIGLGVYDIHSPRVPSKDEMYKIVEQSLQVCDPKYFWINPDCGLKTRRTEEVIPALEHMVQAAKDARSLLKTNA</sequence>
<proteinExistence type="inferred from homology"/>
<reference key="1">
    <citation type="submission" date="2009-04" db="EMBL/GenBank/DDBJ databases">
        <title>Genome sequence of Bacillus anthracis A0248.</title>
        <authorList>
            <person name="Dodson R.J."/>
            <person name="Munk A.C."/>
            <person name="Bruce D."/>
            <person name="Detter C."/>
            <person name="Tapia R."/>
            <person name="Sutton G."/>
            <person name="Sims D."/>
            <person name="Brettin T."/>
        </authorList>
    </citation>
    <scope>NUCLEOTIDE SEQUENCE [LARGE SCALE GENOMIC DNA]</scope>
    <source>
        <strain>A0248</strain>
    </source>
</reference>
<evidence type="ECO:0000255" key="1">
    <source>
        <dbReference type="HAMAP-Rule" id="MF_00172"/>
    </source>
</evidence>
<keyword id="KW-0028">Amino-acid biosynthesis</keyword>
<keyword id="KW-0479">Metal-binding</keyword>
<keyword id="KW-0486">Methionine biosynthesis</keyword>
<keyword id="KW-0489">Methyltransferase</keyword>
<keyword id="KW-0677">Repeat</keyword>
<keyword id="KW-0808">Transferase</keyword>
<keyword id="KW-0862">Zinc</keyword>